<gene>
    <name type="ordered locus">Os01g0928600</name>
    <name type="ordered locus">LOC_Os01g70360</name>
    <name type="ORF">OsJ_04633</name>
    <name type="ORF">OSJNBa0052O12.11</name>
</gene>
<comment type="function">
    <text evidence="1">Serine palmitoyltransferase (SPT). The heterodimer formed with LCB1 constitutes the catalytic core (By similarity).</text>
</comment>
<comment type="catalytic activity">
    <reaction>
        <text>L-serine + hexadecanoyl-CoA + H(+) = 3-oxosphinganine + CO2 + CoA</text>
        <dbReference type="Rhea" id="RHEA:14761"/>
        <dbReference type="ChEBI" id="CHEBI:15378"/>
        <dbReference type="ChEBI" id="CHEBI:16526"/>
        <dbReference type="ChEBI" id="CHEBI:33384"/>
        <dbReference type="ChEBI" id="CHEBI:57287"/>
        <dbReference type="ChEBI" id="CHEBI:57379"/>
        <dbReference type="ChEBI" id="CHEBI:58299"/>
        <dbReference type="EC" id="2.3.1.50"/>
    </reaction>
</comment>
<comment type="cofactor">
    <cofactor evidence="1">
        <name>pyridoxal 5'-phosphate</name>
        <dbReference type="ChEBI" id="CHEBI:597326"/>
    </cofactor>
</comment>
<comment type="pathway">
    <text>Lipid metabolism; sphingolipid metabolism.</text>
</comment>
<comment type="subunit">
    <text evidence="1">Heterodimer with LCB1. Component of the serine palmitoyltransferase (SPT) complex, composed of LCB1 and LCB2 (By similarity).</text>
</comment>
<comment type="subcellular location">
    <subcellularLocation>
        <location evidence="1">Endoplasmic reticulum membrane</location>
        <topology evidence="1">Single-pass membrane protein</topology>
    </subcellularLocation>
</comment>
<comment type="similarity">
    <text evidence="3">Belongs to the class-II pyridoxal-phosphate-dependent aminotransferase family.</text>
</comment>
<comment type="sequence caution" evidence="3">
    <conflict type="erroneous gene model prediction">
        <sequence resource="EMBL-CDS" id="BAF07191"/>
    </conflict>
</comment>
<name>LCB2B_ORYSJ</name>
<feature type="chain" id="PRO_0000419151" description="Long chain base biosynthesis protein 2b">
    <location>
        <begin position="1"/>
        <end position="499"/>
    </location>
</feature>
<feature type="transmembrane region" description="Helical" evidence="2">
    <location>
        <begin position="5"/>
        <end position="25"/>
    </location>
</feature>
<feature type="modified residue" description="N6-(pyridoxal phosphate)lysine" evidence="1">
    <location>
        <position position="322"/>
    </location>
</feature>
<protein>
    <recommendedName>
        <fullName>Long chain base biosynthesis protein 2b</fullName>
        <ecNumber>2.3.1.50</ecNumber>
    </recommendedName>
</protein>
<organism>
    <name type="scientific">Oryza sativa subsp. japonica</name>
    <name type="common">Rice</name>
    <dbReference type="NCBI Taxonomy" id="39947"/>
    <lineage>
        <taxon>Eukaryota</taxon>
        <taxon>Viridiplantae</taxon>
        <taxon>Streptophyta</taxon>
        <taxon>Embryophyta</taxon>
        <taxon>Tracheophyta</taxon>
        <taxon>Spermatophyta</taxon>
        <taxon>Magnoliopsida</taxon>
        <taxon>Liliopsida</taxon>
        <taxon>Poales</taxon>
        <taxon>Poaceae</taxon>
        <taxon>BOP clade</taxon>
        <taxon>Oryzoideae</taxon>
        <taxon>Oryzeae</taxon>
        <taxon>Oryzinae</taxon>
        <taxon>Oryza</taxon>
        <taxon>Oryza sativa</taxon>
    </lineage>
</organism>
<reference key="1">
    <citation type="journal article" date="2002" name="Nature">
        <title>The genome sequence and structure of rice chromosome 1.</title>
        <authorList>
            <person name="Sasaki T."/>
            <person name="Matsumoto T."/>
            <person name="Yamamoto K."/>
            <person name="Sakata K."/>
            <person name="Baba T."/>
            <person name="Katayose Y."/>
            <person name="Wu J."/>
            <person name="Niimura Y."/>
            <person name="Cheng Z."/>
            <person name="Nagamura Y."/>
            <person name="Antonio B.A."/>
            <person name="Kanamori H."/>
            <person name="Hosokawa S."/>
            <person name="Masukawa M."/>
            <person name="Arikawa K."/>
            <person name="Chiden Y."/>
            <person name="Hayashi M."/>
            <person name="Okamoto M."/>
            <person name="Ando T."/>
            <person name="Aoki H."/>
            <person name="Arita K."/>
            <person name="Hamada M."/>
            <person name="Harada C."/>
            <person name="Hijishita S."/>
            <person name="Honda M."/>
            <person name="Ichikawa Y."/>
            <person name="Idonuma A."/>
            <person name="Iijima M."/>
            <person name="Ikeda M."/>
            <person name="Ikeno M."/>
            <person name="Ito S."/>
            <person name="Ito T."/>
            <person name="Ito Y."/>
            <person name="Ito Y."/>
            <person name="Iwabuchi A."/>
            <person name="Kamiya K."/>
            <person name="Karasawa W."/>
            <person name="Katagiri S."/>
            <person name="Kikuta A."/>
            <person name="Kobayashi N."/>
            <person name="Kono I."/>
            <person name="Machita K."/>
            <person name="Maehara T."/>
            <person name="Mizuno H."/>
            <person name="Mizubayashi T."/>
            <person name="Mukai Y."/>
            <person name="Nagasaki H."/>
            <person name="Nakashima M."/>
            <person name="Nakama Y."/>
            <person name="Nakamichi Y."/>
            <person name="Nakamura M."/>
            <person name="Namiki N."/>
            <person name="Negishi M."/>
            <person name="Ohta I."/>
            <person name="Ono N."/>
            <person name="Saji S."/>
            <person name="Sakai K."/>
            <person name="Shibata M."/>
            <person name="Shimokawa T."/>
            <person name="Shomura A."/>
            <person name="Song J."/>
            <person name="Takazaki Y."/>
            <person name="Terasawa K."/>
            <person name="Tsuji K."/>
            <person name="Waki K."/>
            <person name="Yamagata H."/>
            <person name="Yamane H."/>
            <person name="Yoshiki S."/>
            <person name="Yoshihara R."/>
            <person name="Yukawa K."/>
            <person name="Zhong H."/>
            <person name="Iwama H."/>
            <person name="Endo T."/>
            <person name="Ito H."/>
            <person name="Hahn J.H."/>
            <person name="Kim H.-I."/>
            <person name="Eun M.-Y."/>
            <person name="Yano M."/>
            <person name="Jiang J."/>
            <person name="Gojobori T."/>
        </authorList>
    </citation>
    <scope>NUCLEOTIDE SEQUENCE [LARGE SCALE GENOMIC DNA]</scope>
    <source>
        <strain>cv. Nipponbare</strain>
    </source>
</reference>
<reference key="2">
    <citation type="journal article" date="2005" name="Nature">
        <title>The map-based sequence of the rice genome.</title>
        <authorList>
            <consortium name="International rice genome sequencing project (IRGSP)"/>
        </authorList>
    </citation>
    <scope>NUCLEOTIDE SEQUENCE [LARGE SCALE GENOMIC DNA]</scope>
    <source>
        <strain>cv. Nipponbare</strain>
    </source>
</reference>
<reference key="3">
    <citation type="journal article" date="2008" name="Nucleic Acids Res.">
        <title>The rice annotation project database (RAP-DB): 2008 update.</title>
        <authorList>
            <consortium name="The rice annotation project (RAP)"/>
        </authorList>
    </citation>
    <scope>GENOME REANNOTATION</scope>
    <source>
        <strain>cv. Nipponbare</strain>
    </source>
</reference>
<reference key="4">
    <citation type="journal article" date="2013" name="Rice">
        <title>Improvement of the Oryza sativa Nipponbare reference genome using next generation sequence and optical map data.</title>
        <authorList>
            <person name="Kawahara Y."/>
            <person name="de la Bastide M."/>
            <person name="Hamilton J.P."/>
            <person name="Kanamori H."/>
            <person name="McCombie W.R."/>
            <person name="Ouyang S."/>
            <person name="Schwartz D.C."/>
            <person name="Tanaka T."/>
            <person name="Wu J."/>
            <person name="Zhou S."/>
            <person name="Childs K.L."/>
            <person name="Davidson R.M."/>
            <person name="Lin H."/>
            <person name="Quesada-Ocampo L."/>
            <person name="Vaillancourt B."/>
            <person name="Sakai H."/>
            <person name="Lee S.S."/>
            <person name="Kim J."/>
            <person name="Numa H."/>
            <person name="Itoh T."/>
            <person name="Buell C.R."/>
            <person name="Matsumoto T."/>
        </authorList>
    </citation>
    <scope>GENOME REANNOTATION</scope>
    <source>
        <strain>cv. Nipponbare</strain>
    </source>
</reference>
<reference key="5">
    <citation type="journal article" date="2005" name="PLoS Biol.">
        <title>The genomes of Oryza sativa: a history of duplications.</title>
        <authorList>
            <person name="Yu J."/>
            <person name="Wang J."/>
            <person name="Lin W."/>
            <person name="Li S."/>
            <person name="Li H."/>
            <person name="Zhou J."/>
            <person name="Ni P."/>
            <person name="Dong W."/>
            <person name="Hu S."/>
            <person name="Zeng C."/>
            <person name="Zhang J."/>
            <person name="Zhang Y."/>
            <person name="Li R."/>
            <person name="Xu Z."/>
            <person name="Li S."/>
            <person name="Li X."/>
            <person name="Zheng H."/>
            <person name="Cong L."/>
            <person name="Lin L."/>
            <person name="Yin J."/>
            <person name="Geng J."/>
            <person name="Li G."/>
            <person name="Shi J."/>
            <person name="Liu J."/>
            <person name="Lv H."/>
            <person name="Li J."/>
            <person name="Wang J."/>
            <person name="Deng Y."/>
            <person name="Ran L."/>
            <person name="Shi X."/>
            <person name="Wang X."/>
            <person name="Wu Q."/>
            <person name="Li C."/>
            <person name="Ren X."/>
            <person name="Wang J."/>
            <person name="Wang X."/>
            <person name="Li D."/>
            <person name="Liu D."/>
            <person name="Zhang X."/>
            <person name="Ji Z."/>
            <person name="Zhao W."/>
            <person name="Sun Y."/>
            <person name="Zhang Z."/>
            <person name="Bao J."/>
            <person name="Han Y."/>
            <person name="Dong L."/>
            <person name="Ji J."/>
            <person name="Chen P."/>
            <person name="Wu S."/>
            <person name="Liu J."/>
            <person name="Xiao Y."/>
            <person name="Bu D."/>
            <person name="Tan J."/>
            <person name="Yang L."/>
            <person name="Ye C."/>
            <person name="Zhang J."/>
            <person name="Xu J."/>
            <person name="Zhou Y."/>
            <person name="Yu Y."/>
            <person name="Zhang B."/>
            <person name="Zhuang S."/>
            <person name="Wei H."/>
            <person name="Liu B."/>
            <person name="Lei M."/>
            <person name="Yu H."/>
            <person name="Li Y."/>
            <person name="Xu H."/>
            <person name="Wei S."/>
            <person name="He X."/>
            <person name="Fang L."/>
            <person name="Zhang Z."/>
            <person name="Zhang Y."/>
            <person name="Huang X."/>
            <person name="Su Z."/>
            <person name="Tong W."/>
            <person name="Li J."/>
            <person name="Tong Z."/>
            <person name="Li S."/>
            <person name="Ye J."/>
            <person name="Wang L."/>
            <person name="Fang L."/>
            <person name="Lei T."/>
            <person name="Chen C.-S."/>
            <person name="Chen H.-C."/>
            <person name="Xu Z."/>
            <person name="Li H."/>
            <person name="Huang H."/>
            <person name="Zhang F."/>
            <person name="Xu H."/>
            <person name="Li N."/>
            <person name="Zhao C."/>
            <person name="Li S."/>
            <person name="Dong L."/>
            <person name="Huang Y."/>
            <person name="Li L."/>
            <person name="Xi Y."/>
            <person name="Qi Q."/>
            <person name="Li W."/>
            <person name="Zhang B."/>
            <person name="Hu W."/>
            <person name="Zhang Y."/>
            <person name="Tian X."/>
            <person name="Jiao Y."/>
            <person name="Liang X."/>
            <person name="Jin J."/>
            <person name="Gao L."/>
            <person name="Zheng W."/>
            <person name="Hao B."/>
            <person name="Liu S.-M."/>
            <person name="Wang W."/>
            <person name="Yuan L."/>
            <person name="Cao M."/>
            <person name="McDermott J."/>
            <person name="Samudrala R."/>
            <person name="Wang J."/>
            <person name="Wong G.K.-S."/>
            <person name="Yang H."/>
        </authorList>
    </citation>
    <scope>NUCLEOTIDE SEQUENCE [LARGE SCALE GENOMIC DNA]</scope>
    <source>
        <strain>cv. Nipponbare</strain>
    </source>
</reference>
<reference key="6">
    <citation type="submission" date="2006-10" db="EMBL/GenBank/DDBJ databases">
        <title>Oryza sativa full length cDNA.</title>
        <authorList>
            <consortium name="The rice full-length cDNA consortium"/>
        </authorList>
    </citation>
    <scope>NUCLEOTIDE SEQUENCE [LARGE SCALE MRNA]</scope>
    <source>
        <strain>cv. Nipponbare</strain>
    </source>
</reference>
<sequence>MVIKVPYVTAATTLFSFGLIFGFGHLRDSFRALLRLLFSSAAAADSPAGCNSKGYAPICVGKEDFYIRRFFRRVQDCFGRPIASKPDAWFDVVERYSTDSNKTLHCTTKTSKCLNLASFNYLGFAAADEYCTPRVIESLKKYSASTCSSRVDGGNTQLHIELEELVARFVRKPSAILLAMGYATNSAIIPALIGKGGLIISDSLNHNSIVSGARASGATIRVFEHNNPAHLEKLLREQISGGQPRTHRAWKKILVIVEGIYSMEGELCKLPEIISVCKKYKVYTYMDEAHSIGAVGKTGRGVCELLGVDPADVDIMMGTLSKSFGSSGGYIAASKEIIQHLKLTCPSHIYGTSMSPPAVQQVISAMKVILGEDGTDRGAKKIAQIRDNSNFFRSELQKMGFEVLGDNDSPVMPFMVYNPAKMPAFSRECLKQNVAVVPVGFPATPLLLGRIRICISASHSREDLIKGLEVISNVGDLVGIKYLPVEQEETTSVEKPKKL</sequence>
<evidence type="ECO:0000250" key="1"/>
<evidence type="ECO:0000255" key="2"/>
<evidence type="ECO:0000305" key="3"/>
<keyword id="KW-0012">Acyltransferase</keyword>
<keyword id="KW-0256">Endoplasmic reticulum</keyword>
<keyword id="KW-0443">Lipid metabolism</keyword>
<keyword id="KW-0472">Membrane</keyword>
<keyword id="KW-0663">Pyridoxal phosphate</keyword>
<keyword id="KW-1185">Reference proteome</keyword>
<keyword id="KW-0746">Sphingolipid metabolism</keyword>
<keyword id="KW-0808">Transferase</keyword>
<keyword id="KW-0812">Transmembrane</keyword>
<keyword id="KW-1133">Transmembrane helix</keyword>
<dbReference type="EC" id="2.3.1.50"/>
<dbReference type="EMBL" id="AP004330">
    <property type="protein sequence ID" value="BAB90751.1"/>
    <property type="molecule type" value="Genomic_DNA"/>
</dbReference>
<dbReference type="EMBL" id="AP008207">
    <property type="protein sequence ID" value="BAF07191.2"/>
    <property type="status" value="ALT_SEQ"/>
    <property type="molecule type" value="Genomic_DNA"/>
</dbReference>
<dbReference type="EMBL" id="AP014957">
    <property type="protein sequence ID" value="BAS76014.1"/>
    <property type="molecule type" value="Genomic_DNA"/>
</dbReference>
<dbReference type="EMBL" id="CM000138">
    <property type="protein sequence ID" value="EAZ14709.1"/>
    <property type="molecule type" value="Genomic_DNA"/>
</dbReference>
<dbReference type="EMBL" id="AK241034">
    <property type="protein sequence ID" value="BAH00934.1"/>
    <property type="molecule type" value="mRNA"/>
</dbReference>
<dbReference type="RefSeq" id="XP_015613372.1">
    <property type="nucleotide sequence ID" value="XM_015757886.1"/>
</dbReference>
<dbReference type="SMR" id="Q8RYL1"/>
<dbReference type="FunCoup" id="Q8RYL1">
    <property type="interactions" value="1163"/>
</dbReference>
<dbReference type="STRING" id="39947.Q8RYL1"/>
<dbReference type="PaxDb" id="39947-Q8RYL1"/>
<dbReference type="EnsemblPlants" id="Os01t0928600-01">
    <property type="protein sequence ID" value="Os01t0928600-01"/>
    <property type="gene ID" value="Os01g0928600"/>
</dbReference>
<dbReference type="Gramene" id="Os01t0928600-01">
    <property type="protein sequence ID" value="Os01t0928600-01"/>
    <property type="gene ID" value="Os01g0928600"/>
</dbReference>
<dbReference type="KEGG" id="dosa:Os01g0928600"/>
<dbReference type="eggNOG" id="KOG1357">
    <property type="taxonomic scope" value="Eukaryota"/>
</dbReference>
<dbReference type="HOGENOM" id="CLU_015846_7_0_1"/>
<dbReference type="InParanoid" id="Q8RYL1"/>
<dbReference type="OMA" id="FFTRHMY"/>
<dbReference type="OrthoDB" id="65434at2759"/>
<dbReference type="PlantReactome" id="R-OSA-1119325">
    <property type="pathway name" value="Sphingolipid metabolism"/>
</dbReference>
<dbReference type="PlantReactome" id="R-OSA-1119610">
    <property type="pathway name" value="Biotin biosynthesis II"/>
</dbReference>
<dbReference type="UniPathway" id="UPA00222"/>
<dbReference type="Proteomes" id="UP000000763">
    <property type="component" value="Chromosome 1"/>
</dbReference>
<dbReference type="Proteomes" id="UP000007752">
    <property type="component" value="Chromosome 1"/>
</dbReference>
<dbReference type="Proteomes" id="UP000059680">
    <property type="component" value="Chromosome 1"/>
</dbReference>
<dbReference type="GO" id="GO:0005789">
    <property type="term" value="C:endoplasmic reticulum membrane"/>
    <property type="evidence" value="ECO:0007669"/>
    <property type="project" value="UniProtKB-SubCell"/>
</dbReference>
<dbReference type="GO" id="GO:0017059">
    <property type="term" value="C:serine palmitoyltransferase complex"/>
    <property type="evidence" value="ECO:0000318"/>
    <property type="project" value="GO_Central"/>
</dbReference>
<dbReference type="GO" id="GO:0030170">
    <property type="term" value="F:pyridoxal phosphate binding"/>
    <property type="evidence" value="ECO:0007669"/>
    <property type="project" value="InterPro"/>
</dbReference>
<dbReference type="GO" id="GO:0004758">
    <property type="term" value="F:serine C-palmitoyltransferase activity"/>
    <property type="evidence" value="ECO:0000318"/>
    <property type="project" value="GO_Central"/>
</dbReference>
<dbReference type="GO" id="GO:0046513">
    <property type="term" value="P:ceramide biosynthetic process"/>
    <property type="evidence" value="ECO:0000318"/>
    <property type="project" value="GO_Central"/>
</dbReference>
<dbReference type="GO" id="GO:0046512">
    <property type="term" value="P:sphingosine biosynthetic process"/>
    <property type="evidence" value="ECO:0000318"/>
    <property type="project" value="GO_Central"/>
</dbReference>
<dbReference type="CDD" id="cd06454">
    <property type="entry name" value="KBL_like"/>
    <property type="match status" value="1"/>
</dbReference>
<dbReference type="Gene3D" id="3.90.1150.10">
    <property type="entry name" value="Aspartate Aminotransferase, domain 1"/>
    <property type="match status" value="1"/>
</dbReference>
<dbReference type="Gene3D" id="3.40.640.10">
    <property type="entry name" value="Type I PLP-dependent aspartate aminotransferase-like (Major domain)"/>
    <property type="match status" value="1"/>
</dbReference>
<dbReference type="InterPro" id="IPR001917">
    <property type="entry name" value="Aminotrans_II_pyridoxalP_BS"/>
</dbReference>
<dbReference type="InterPro" id="IPR004839">
    <property type="entry name" value="Aminotransferase_I/II_large"/>
</dbReference>
<dbReference type="InterPro" id="IPR050087">
    <property type="entry name" value="AON_synthase_class-II"/>
</dbReference>
<dbReference type="InterPro" id="IPR015424">
    <property type="entry name" value="PyrdxlP-dep_Trfase"/>
</dbReference>
<dbReference type="InterPro" id="IPR015421">
    <property type="entry name" value="PyrdxlP-dep_Trfase_major"/>
</dbReference>
<dbReference type="InterPro" id="IPR015422">
    <property type="entry name" value="PyrdxlP-dep_Trfase_small"/>
</dbReference>
<dbReference type="PANTHER" id="PTHR13693">
    <property type="entry name" value="CLASS II AMINOTRANSFERASE/8-AMINO-7-OXONONANOATE SYNTHASE"/>
    <property type="match status" value="1"/>
</dbReference>
<dbReference type="PANTHER" id="PTHR13693:SF104">
    <property type="entry name" value="LONG CHAIN BASE BIOSYNTHESIS PROTEIN 2B"/>
    <property type="match status" value="1"/>
</dbReference>
<dbReference type="Pfam" id="PF00155">
    <property type="entry name" value="Aminotran_1_2"/>
    <property type="match status" value="1"/>
</dbReference>
<dbReference type="SUPFAM" id="SSF53383">
    <property type="entry name" value="PLP-dependent transferases"/>
    <property type="match status" value="1"/>
</dbReference>
<dbReference type="PROSITE" id="PS00599">
    <property type="entry name" value="AA_TRANSFER_CLASS_2"/>
    <property type="match status" value="1"/>
</dbReference>
<accession>Q8RYL1</accession>
<accession>A0A0P0VC95</accession>
<accession>Q0JGD7</accession>
<proteinExistence type="evidence at transcript level"/>